<dbReference type="EC" id="1.14.14.137" evidence="2"/>
<dbReference type="EMBL" id="AP004457">
    <property type="protein sequence ID" value="BAD09367.1"/>
    <property type="molecule type" value="Genomic_DNA"/>
</dbReference>
<dbReference type="EMBL" id="AP008214">
    <property type="protein sequence ID" value="BAF23935.1"/>
    <property type="molecule type" value="Genomic_DNA"/>
</dbReference>
<dbReference type="EMBL" id="AP014964">
    <property type="protein sequence ID" value="BAT05855.1"/>
    <property type="molecule type" value="Genomic_DNA"/>
</dbReference>
<dbReference type="EMBL" id="CM000145">
    <property type="protein sequence ID" value="EAZ43058.1"/>
    <property type="status" value="ALT_SEQ"/>
    <property type="molecule type" value="Genomic_DNA"/>
</dbReference>
<dbReference type="EMBL" id="AK120757">
    <property type="status" value="NOT_ANNOTATED_CDS"/>
    <property type="molecule type" value="mRNA"/>
</dbReference>
<dbReference type="RefSeq" id="XP_015648451.1">
    <property type="nucleotide sequence ID" value="XM_015792965.1"/>
</dbReference>
<dbReference type="SMR" id="Q6ZDE3"/>
<dbReference type="FunCoup" id="Q6ZDE3">
    <property type="interactions" value="421"/>
</dbReference>
<dbReference type="STRING" id="39947.Q6ZDE3"/>
<dbReference type="PaxDb" id="39947-Q6ZDE3"/>
<dbReference type="EnsemblPlants" id="Os08t0472800-01">
    <property type="protein sequence ID" value="Os08t0472800-01"/>
    <property type="gene ID" value="Os08g0472800"/>
</dbReference>
<dbReference type="Gramene" id="Os08t0472800-01">
    <property type="protein sequence ID" value="Os08t0472800-01"/>
    <property type="gene ID" value="Os08g0472800"/>
</dbReference>
<dbReference type="KEGG" id="dosa:Os08g0472800"/>
<dbReference type="eggNOG" id="KOG0157">
    <property type="taxonomic scope" value="Eukaryota"/>
</dbReference>
<dbReference type="HOGENOM" id="CLU_001570_15_5_1"/>
<dbReference type="InParanoid" id="Q6ZDE3"/>
<dbReference type="OMA" id="AHMCLGL"/>
<dbReference type="OrthoDB" id="1372046at2759"/>
<dbReference type="BRENDA" id="1.14.14.137">
    <property type="organism ID" value="4460"/>
</dbReference>
<dbReference type="UniPathway" id="UPA00093"/>
<dbReference type="Proteomes" id="UP000000763">
    <property type="component" value="Chromosome 8"/>
</dbReference>
<dbReference type="Proteomes" id="UP000007752">
    <property type="component" value="Chromosome 8"/>
</dbReference>
<dbReference type="Proteomes" id="UP000059680">
    <property type="component" value="Chromosome 8"/>
</dbReference>
<dbReference type="GO" id="GO:0016020">
    <property type="term" value="C:membrane"/>
    <property type="evidence" value="ECO:0007669"/>
    <property type="project" value="UniProtKB-SubCell"/>
</dbReference>
<dbReference type="GO" id="GO:0010295">
    <property type="term" value="F:(+)-abscisic acid 8'-hydroxylase activity"/>
    <property type="evidence" value="ECO:0000318"/>
    <property type="project" value="GO_Central"/>
</dbReference>
<dbReference type="GO" id="GO:0020037">
    <property type="term" value="F:heme binding"/>
    <property type="evidence" value="ECO:0007669"/>
    <property type="project" value="InterPro"/>
</dbReference>
<dbReference type="GO" id="GO:0005506">
    <property type="term" value="F:iron ion binding"/>
    <property type="evidence" value="ECO:0007669"/>
    <property type="project" value="InterPro"/>
</dbReference>
<dbReference type="GO" id="GO:0046345">
    <property type="term" value="P:abscisic acid catabolic process"/>
    <property type="evidence" value="ECO:0007669"/>
    <property type="project" value="UniProtKB-UniPathway"/>
</dbReference>
<dbReference type="CDD" id="cd11043">
    <property type="entry name" value="CYP90-like"/>
    <property type="match status" value="1"/>
</dbReference>
<dbReference type="FunFam" id="1.10.630.10:FF:000014">
    <property type="entry name" value="Abscisic acid 8"/>
    <property type="match status" value="1"/>
</dbReference>
<dbReference type="Gene3D" id="1.10.630.10">
    <property type="entry name" value="Cytochrome P450"/>
    <property type="match status" value="1"/>
</dbReference>
<dbReference type="InterPro" id="IPR001128">
    <property type="entry name" value="Cyt_P450"/>
</dbReference>
<dbReference type="InterPro" id="IPR017972">
    <property type="entry name" value="Cyt_P450_CS"/>
</dbReference>
<dbReference type="InterPro" id="IPR002401">
    <property type="entry name" value="Cyt_P450_E_grp-I"/>
</dbReference>
<dbReference type="InterPro" id="IPR036396">
    <property type="entry name" value="Cyt_P450_sf"/>
</dbReference>
<dbReference type="PANTHER" id="PTHR24286:SF354">
    <property type="entry name" value="ABSCISIC ACID 8'-HYDROXYLASE 2"/>
    <property type="match status" value="1"/>
</dbReference>
<dbReference type="PANTHER" id="PTHR24286">
    <property type="entry name" value="CYTOCHROME P450 26"/>
    <property type="match status" value="1"/>
</dbReference>
<dbReference type="Pfam" id="PF00067">
    <property type="entry name" value="p450"/>
    <property type="match status" value="1"/>
</dbReference>
<dbReference type="PRINTS" id="PR00463">
    <property type="entry name" value="EP450I"/>
</dbReference>
<dbReference type="PRINTS" id="PR00385">
    <property type="entry name" value="P450"/>
</dbReference>
<dbReference type="SUPFAM" id="SSF48264">
    <property type="entry name" value="Cytochrome P450"/>
    <property type="match status" value="1"/>
</dbReference>
<dbReference type="PROSITE" id="PS00086">
    <property type="entry name" value="CYTOCHROME_P450"/>
    <property type="match status" value="1"/>
</dbReference>
<comment type="function">
    <text>Involved in the oxidative degradation of abscisic acid.</text>
</comment>
<comment type="catalytic activity">
    <reaction evidence="2">
        <text>2-cis-(+)-abscisate + reduced [NADPH--hemoprotein reductase] + O2 = (+)-8'-hydroxyabscisate + oxidized [NADPH--hemoprotein reductase] + H2O + H(+)</text>
        <dbReference type="Rhea" id="RHEA:12897"/>
        <dbReference type="Rhea" id="RHEA-COMP:11964"/>
        <dbReference type="Rhea" id="RHEA-COMP:11965"/>
        <dbReference type="ChEBI" id="CHEBI:15377"/>
        <dbReference type="ChEBI" id="CHEBI:15378"/>
        <dbReference type="ChEBI" id="CHEBI:15379"/>
        <dbReference type="ChEBI" id="CHEBI:37569"/>
        <dbReference type="ChEBI" id="CHEBI:57618"/>
        <dbReference type="ChEBI" id="CHEBI:58210"/>
        <dbReference type="ChEBI" id="CHEBI:58490"/>
        <dbReference type="EC" id="1.14.14.137"/>
    </reaction>
</comment>
<comment type="cofactor">
    <cofactor evidence="1">
        <name>heme</name>
        <dbReference type="ChEBI" id="CHEBI:30413"/>
    </cofactor>
</comment>
<comment type="pathway">
    <text>Plant hormone degradation; abscisic acid degradation.</text>
</comment>
<comment type="subcellular location">
    <subcellularLocation>
        <location evidence="4">Membrane</location>
        <topology evidence="4">Single-pass membrane protein</topology>
    </subcellularLocation>
</comment>
<comment type="induction">
    <text>Not induced by ethylene treatment or flooding.</text>
</comment>
<comment type="similarity">
    <text evidence="4">Belongs to the cytochrome P450 family.</text>
</comment>
<comment type="sequence caution" evidence="4">
    <conflict type="erroneous gene model prediction">
        <sequence resource="EMBL-CDS" id="EAZ43058"/>
    </conflict>
</comment>
<name>ABAH2_ORYSJ</name>
<protein>
    <recommendedName>
        <fullName>Abscisic acid 8'-hydroxylase 2</fullName>
        <shortName>ABA 8'-hydroxylase 2</shortName>
        <ecNumber evidence="2">1.14.14.137</ecNumber>
    </recommendedName>
    <alternativeName>
        <fullName>Cytochrome P450 707A6</fullName>
    </alternativeName>
    <alternativeName>
        <fullName>OsABA8ox2</fullName>
    </alternativeName>
</protein>
<feature type="chain" id="PRO_0000288646" description="Abscisic acid 8'-hydroxylase 2">
    <location>
        <begin position="1"/>
        <end position="510"/>
    </location>
</feature>
<feature type="transmembrane region" description="Helical" evidence="3">
    <location>
        <begin position="3"/>
        <end position="23"/>
    </location>
</feature>
<feature type="binding site" description="axial binding residue" evidence="1">
    <location>
        <position position="441"/>
    </location>
    <ligand>
        <name>heme</name>
        <dbReference type="ChEBI" id="CHEBI:30413"/>
    </ligand>
    <ligandPart>
        <name>Fe</name>
        <dbReference type="ChEBI" id="CHEBI:18248"/>
    </ligandPart>
</feature>
<feature type="sequence conflict" description="In Ref. 5; AK120757." evidence="4" ref="5">
    <original>T</original>
    <variation>S</variation>
    <location>
        <position position="430"/>
    </location>
</feature>
<accession>Q6ZDE3</accession>
<accession>A0A0P0XGQ2</accession>
<accession>A3BU19</accession>
<proteinExistence type="evidence at transcript level"/>
<organism>
    <name type="scientific">Oryza sativa subsp. japonica</name>
    <name type="common">Rice</name>
    <dbReference type="NCBI Taxonomy" id="39947"/>
    <lineage>
        <taxon>Eukaryota</taxon>
        <taxon>Viridiplantae</taxon>
        <taxon>Streptophyta</taxon>
        <taxon>Embryophyta</taxon>
        <taxon>Tracheophyta</taxon>
        <taxon>Spermatophyta</taxon>
        <taxon>Magnoliopsida</taxon>
        <taxon>Liliopsida</taxon>
        <taxon>Poales</taxon>
        <taxon>Poaceae</taxon>
        <taxon>BOP clade</taxon>
        <taxon>Oryzoideae</taxon>
        <taxon>Oryzeae</taxon>
        <taxon>Oryzinae</taxon>
        <taxon>Oryza</taxon>
        <taxon>Oryza sativa</taxon>
    </lineage>
</organism>
<evidence type="ECO:0000250" key="1"/>
<evidence type="ECO:0000250" key="2">
    <source>
        <dbReference type="UniProtKB" id="Q949P1"/>
    </source>
</evidence>
<evidence type="ECO:0000255" key="3"/>
<evidence type="ECO:0000305" key="4"/>
<reference key="1">
    <citation type="journal article" date="2005" name="Nature">
        <title>The map-based sequence of the rice genome.</title>
        <authorList>
            <consortium name="International rice genome sequencing project (IRGSP)"/>
        </authorList>
    </citation>
    <scope>NUCLEOTIDE SEQUENCE [LARGE SCALE GENOMIC DNA]</scope>
    <source>
        <strain>cv. Nipponbare</strain>
    </source>
</reference>
<reference key="2">
    <citation type="journal article" date="2008" name="Nucleic Acids Res.">
        <title>The rice annotation project database (RAP-DB): 2008 update.</title>
        <authorList>
            <consortium name="The rice annotation project (RAP)"/>
        </authorList>
    </citation>
    <scope>GENOME REANNOTATION</scope>
    <source>
        <strain>cv. Nipponbare</strain>
    </source>
</reference>
<reference key="3">
    <citation type="journal article" date="2013" name="Rice">
        <title>Improvement of the Oryza sativa Nipponbare reference genome using next generation sequence and optical map data.</title>
        <authorList>
            <person name="Kawahara Y."/>
            <person name="de la Bastide M."/>
            <person name="Hamilton J.P."/>
            <person name="Kanamori H."/>
            <person name="McCombie W.R."/>
            <person name="Ouyang S."/>
            <person name="Schwartz D.C."/>
            <person name="Tanaka T."/>
            <person name="Wu J."/>
            <person name="Zhou S."/>
            <person name="Childs K.L."/>
            <person name="Davidson R.M."/>
            <person name="Lin H."/>
            <person name="Quesada-Ocampo L."/>
            <person name="Vaillancourt B."/>
            <person name="Sakai H."/>
            <person name="Lee S.S."/>
            <person name="Kim J."/>
            <person name="Numa H."/>
            <person name="Itoh T."/>
            <person name="Buell C.R."/>
            <person name="Matsumoto T."/>
        </authorList>
    </citation>
    <scope>GENOME REANNOTATION</scope>
    <source>
        <strain>cv. Nipponbare</strain>
    </source>
</reference>
<reference key="4">
    <citation type="journal article" date="2005" name="PLoS Biol.">
        <title>The genomes of Oryza sativa: a history of duplications.</title>
        <authorList>
            <person name="Yu J."/>
            <person name="Wang J."/>
            <person name="Lin W."/>
            <person name="Li S."/>
            <person name="Li H."/>
            <person name="Zhou J."/>
            <person name="Ni P."/>
            <person name="Dong W."/>
            <person name="Hu S."/>
            <person name="Zeng C."/>
            <person name="Zhang J."/>
            <person name="Zhang Y."/>
            <person name="Li R."/>
            <person name="Xu Z."/>
            <person name="Li S."/>
            <person name="Li X."/>
            <person name="Zheng H."/>
            <person name="Cong L."/>
            <person name="Lin L."/>
            <person name="Yin J."/>
            <person name="Geng J."/>
            <person name="Li G."/>
            <person name="Shi J."/>
            <person name="Liu J."/>
            <person name="Lv H."/>
            <person name="Li J."/>
            <person name="Wang J."/>
            <person name="Deng Y."/>
            <person name="Ran L."/>
            <person name="Shi X."/>
            <person name="Wang X."/>
            <person name="Wu Q."/>
            <person name="Li C."/>
            <person name="Ren X."/>
            <person name="Wang J."/>
            <person name="Wang X."/>
            <person name="Li D."/>
            <person name="Liu D."/>
            <person name="Zhang X."/>
            <person name="Ji Z."/>
            <person name="Zhao W."/>
            <person name="Sun Y."/>
            <person name="Zhang Z."/>
            <person name="Bao J."/>
            <person name="Han Y."/>
            <person name="Dong L."/>
            <person name="Ji J."/>
            <person name="Chen P."/>
            <person name="Wu S."/>
            <person name="Liu J."/>
            <person name="Xiao Y."/>
            <person name="Bu D."/>
            <person name="Tan J."/>
            <person name="Yang L."/>
            <person name="Ye C."/>
            <person name="Zhang J."/>
            <person name="Xu J."/>
            <person name="Zhou Y."/>
            <person name="Yu Y."/>
            <person name="Zhang B."/>
            <person name="Zhuang S."/>
            <person name="Wei H."/>
            <person name="Liu B."/>
            <person name="Lei M."/>
            <person name="Yu H."/>
            <person name="Li Y."/>
            <person name="Xu H."/>
            <person name="Wei S."/>
            <person name="He X."/>
            <person name="Fang L."/>
            <person name="Zhang Z."/>
            <person name="Zhang Y."/>
            <person name="Huang X."/>
            <person name="Su Z."/>
            <person name="Tong W."/>
            <person name="Li J."/>
            <person name="Tong Z."/>
            <person name="Li S."/>
            <person name="Ye J."/>
            <person name="Wang L."/>
            <person name="Fang L."/>
            <person name="Lei T."/>
            <person name="Chen C.-S."/>
            <person name="Chen H.-C."/>
            <person name="Xu Z."/>
            <person name="Li H."/>
            <person name="Huang H."/>
            <person name="Zhang F."/>
            <person name="Xu H."/>
            <person name="Li N."/>
            <person name="Zhao C."/>
            <person name="Li S."/>
            <person name="Dong L."/>
            <person name="Huang Y."/>
            <person name="Li L."/>
            <person name="Xi Y."/>
            <person name="Qi Q."/>
            <person name="Li W."/>
            <person name="Zhang B."/>
            <person name="Hu W."/>
            <person name="Zhang Y."/>
            <person name="Tian X."/>
            <person name="Jiao Y."/>
            <person name="Liang X."/>
            <person name="Jin J."/>
            <person name="Gao L."/>
            <person name="Zheng W."/>
            <person name="Hao B."/>
            <person name="Liu S.-M."/>
            <person name="Wang W."/>
            <person name="Yuan L."/>
            <person name="Cao M."/>
            <person name="McDermott J."/>
            <person name="Samudrala R."/>
            <person name="Wang J."/>
            <person name="Wong G.K.-S."/>
            <person name="Yang H."/>
        </authorList>
    </citation>
    <scope>NUCLEOTIDE SEQUENCE [LARGE SCALE GENOMIC DNA]</scope>
    <source>
        <strain>cv. Nipponbare</strain>
    </source>
</reference>
<reference key="5">
    <citation type="journal article" date="2003" name="Science">
        <title>Collection, mapping, and annotation of over 28,000 cDNA clones from japonica rice.</title>
        <authorList>
            <consortium name="The rice full-length cDNA consortium"/>
        </authorList>
    </citation>
    <scope>NUCLEOTIDE SEQUENCE [LARGE SCALE MRNA]</scope>
    <source>
        <strain>cv. Nipponbare</strain>
    </source>
</reference>
<reference key="6">
    <citation type="journal article" date="2007" name="Plant Cell Physiol.">
        <title>Ethylene promotes submergence-induced expression of OsABA8ox1, a gene that encodes ABA 8'-hydroxylase in rice.</title>
        <authorList>
            <person name="Saika H."/>
            <person name="Okamoto M."/>
            <person name="Miyoshi K."/>
            <person name="Kushiro T."/>
            <person name="Shinoda S."/>
            <person name="Jikumaru Y."/>
            <person name="Fujimoto M."/>
            <person name="Arikawa T."/>
            <person name="Takahashi H."/>
            <person name="Ando M."/>
            <person name="Arimura S."/>
            <person name="Miyao A."/>
            <person name="Hirochika H."/>
            <person name="Kamiya Y."/>
            <person name="Tsutsumi N."/>
            <person name="Nambara E."/>
            <person name="Nakazono M."/>
        </authorList>
    </citation>
    <scope>IDENTIFICATION</scope>
    <scope>LACK OF INDUCTION</scope>
    <source>
        <strain>cv. Nipponbare</strain>
    </source>
</reference>
<sequence>MAFLLFFVFVTAAVLCFVVPAFLLLCTSVQRRRDVGQGGGRDWQKKKKLRLPPGSMGWPYVGETLQLYSQDPNVFFASKQKRYGEIFKTNLLGCPCVMLASPEAARFVLVSQARLFKPTYPPSKERMIGPSALFFHQGEYHLRLRRLVQAALAPDSLRALVPDVDAAVAATLAAWSGGHVASTFHAMKKLSFDVGVVTIFGGRLGRRHREELRTNYSVVERGYNCFPNRFPGTLYHKAIQARKRLRAILSEIVAERRARGGGGGGGGDDLLGGLMRSRDDGTAGAVALLTDDQIADNVVGVLFAAQDTTASVLTWILKYLHDSPKLLEAVKAEQMAIYVANEGGKRPLTWTQTRSMTLTHQVILESLRMASIISFTFREAVADVEYKGFLIPKGWKVMPLFRNIHHNPDYFQDPQKFDPSRFKVAPRPSTFLPFGSGVHACPGNELAKLEMLVLVHRLVTAYRWEIVGASDEVEYSPFPVPRGGLNAKLWKQEAEEDMYMAMGTITAAGA</sequence>
<gene>
    <name type="primary">CYP707A6</name>
    <name type="synonym">ABA8OX2</name>
    <name type="ordered locus">Os08g0472800</name>
    <name type="ordered locus">LOC_Os08g36860</name>
    <name type="ORF">OsJ_026541</name>
    <name type="ORF">P0013B04.19</name>
</gene>
<keyword id="KW-0349">Heme</keyword>
<keyword id="KW-0408">Iron</keyword>
<keyword id="KW-0472">Membrane</keyword>
<keyword id="KW-0479">Metal-binding</keyword>
<keyword id="KW-0503">Monooxygenase</keyword>
<keyword id="KW-0560">Oxidoreductase</keyword>
<keyword id="KW-1185">Reference proteome</keyword>
<keyword id="KW-0812">Transmembrane</keyword>
<keyword id="KW-1133">Transmembrane helix</keyword>